<keyword id="KW-0012">Acyltransferase</keyword>
<keyword id="KW-0119">Carbohydrate metabolism</keyword>
<keyword id="KW-0963">Cytoplasm</keyword>
<keyword id="KW-0313">Glucose metabolism</keyword>
<keyword id="KW-0556">Organic radical</keyword>
<keyword id="KW-0808">Transferase</keyword>
<feature type="chain" id="PRO_0000271726" description="Formate acetyltransferase">
    <location>
        <begin position="1"/>
        <end position="749"/>
    </location>
</feature>
<feature type="domain" description="PFL" evidence="4">
    <location>
        <begin position="3"/>
        <end position="619"/>
    </location>
</feature>
<feature type="domain" description="Glycine radical" evidence="3">
    <location>
        <begin position="626"/>
        <end position="749"/>
    </location>
</feature>
<feature type="active site" description="S-acetylcysteine intermediate" evidence="1">
    <location>
        <position position="413"/>
    </location>
</feature>
<feature type="active site" description="Cysteine radical intermediate" evidence="1">
    <location>
        <position position="414"/>
    </location>
</feature>
<feature type="modified residue" description="Glycine radical" evidence="3">
    <location>
        <position position="724"/>
    </location>
</feature>
<name>PFLB_STAAS</name>
<proteinExistence type="inferred from homology"/>
<accession>Q6GCQ0</accession>
<dbReference type="EC" id="2.3.1.54" evidence="1"/>
<dbReference type="EMBL" id="BX571857">
    <property type="protein sequence ID" value="CAG41969.1"/>
    <property type="molecule type" value="Genomic_DNA"/>
</dbReference>
<dbReference type="RefSeq" id="WP_000894660.1">
    <property type="nucleotide sequence ID" value="NC_002953.3"/>
</dbReference>
<dbReference type="SMR" id="Q6GCQ0"/>
<dbReference type="KEGG" id="sas:SAS0201"/>
<dbReference type="HOGENOM" id="CLU_023898_0_0_9"/>
<dbReference type="UniPathway" id="UPA00920">
    <property type="reaction ID" value="UER00891"/>
</dbReference>
<dbReference type="GO" id="GO:0005829">
    <property type="term" value="C:cytosol"/>
    <property type="evidence" value="ECO:0007669"/>
    <property type="project" value="TreeGrafter"/>
</dbReference>
<dbReference type="GO" id="GO:0008861">
    <property type="term" value="F:formate C-acetyltransferase activity"/>
    <property type="evidence" value="ECO:0007669"/>
    <property type="project" value="UniProtKB-EC"/>
</dbReference>
<dbReference type="GO" id="GO:0006006">
    <property type="term" value="P:glucose metabolic process"/>
    <property type="evidence" value="ECO:0007669"/>
    <property type="project" value="UniProtKB-KW"/>
</dbReference>
<dbReference type="CDD" id="cd01678">
    <property type="entry name" value="PFL1"/>
    <property type="match status" value="1"/>
</dbReference>
<dbReference type="FunFam" id="3.20.70.20:FF:000003">
    <property type="entry name" value="Formate acetyltransferase"/>
    <property type="match status" value="1"/>
</dbReference>
<dbReference type="Gene3D" id="3.20.70.20">
    <property type="match status" value="1"/>
</dbReference>
<dbReference type="InterPro" id="IPR050244">
    <property type="entry name" value="Auton_GlycylRad_Cofactor"/>
</dbReference>
<dbReference type="InterPro" id="IPR005949">
    <property type="entry name" value="Form_AcTrfase"/>
</dbReference>
<dbReference type="InterPro" id="IPR019777">
    <property type="entry name" value="Form_AcTrfase_GR_CS"/>
</dbReference>
<dbReference type="InterPro" id="IPR001150">
    <property type="entry name" value="Gly_radical"/>
</dbReference>
<dbReference type="InterPro" id="IPR004184">
    <property type="entry name" value="PFL_dom"/>
</dbReference>
<dbReference type="NCBIfam" id="TIGR01255">
    <property type="entry name" value="pyr_form_ly_1"/>
    <property type="match status" value="1"/>
</dbReference>
<dbReference type="PANTHER" id="PTHR30191">
    <property type="entry name" value="FORMATE ACETYLTRANSFERASE"/>
    <property type="match status" value="1"/>
</dbReference>
<dbReference type="PANTHER" id="PTHR30191:SF0">
    <property type="entry name" value="FORMATE ACETYLTRANSFERASE 1"/>
    <property type="match status" value="1"/>
</dbReference>
<dbReference type="Pfam" id="PF01228">
    <property type="entry name" value="Gly_radical"/>
    <property type="match status" value="1"/>
</dbReference>
<dbReference type="Pfam" id="PF02901">
    <property type="entry name" value="PFL-like"/>
    <property type="match status" value="1"/>
</dbReference>
<dbReference type="PIRSF" id="PIRSF000379">
    <property type="entry name" value="For_Ac_trans_1"/>
    <property type="match status" value="1"/>
</dbReference>
<dbReference type="SUPFAM" id="SSF51998">
    <property type="entry name" value="PFL-like glycyl radical enzymes"/>
    <property type="match status" value="1"/>
</dbReference>
<dbReference type="PROSITE" id="PS00850">
    <property type="entry name" value="GLY_RADICAL_1"/>
    <property type="match status" value="1"/>
</dbReference>
<dbReference type="PROSITE" id="PS51149">
    <property type="entry name" value="GLY_RADICAL_2"/>
    <property type="match status" value="1"/>
</dbReference>
<dbReference type="PROSITE" id="PS51554">
    <property type="entry name" value="PFL"/>
    <property type="match status" value="1"/>
</dbReference>
<gene>
    <name type="primary">pflB</name>
    <name type="ordered locus">SAS0201</name>
</gene>
<sequence>MLETNKNHATAWQGFKNGRWNRHVDVREFIQLNYTLYEGNDSFLAGPTEATSKLWEQVMQLSKEERERGGMWDMDTKVASTITSHDAGYLDKDLETIVGVQTEKPFKRSMQPFGGIRMAKAACEAYGYELDEETEKIFTDYRKTHNQGVFDAYSREMLNCRKAGVITGLPDAYGRGRIIGDYRRVALYGVDFLMEEKMHDFNTMSTEMSEDVIRLREELSEQYRALKELKELGQKYGFDLSRPAENFKEAVQWLYLAYLAAIKEQNGAAMSLGRTSTFLDIYAERDLKAGVITESEVQEIIDHFIMKLRIVKFARTPDYNELFSGDPTWVTESIGGVGIDGRPLVTKNSFRFLHSLDNLGPAPEPNLTVLWSVRLPDNFKTYCAKMSIKTSSIQYENDDIMRESYGDDYGIACCVSAMTIGKQMQFFGARANLAKTLLYAINGGKDEKSGAQVGPNFEGINSEVLEYDEVFKKFDQMMDWLAGVYINSLNVIHYMHDKYSYERIEMALHDTEIVRTMATGIAGLSVAADSLSAIKYAQVKPIRNEEGLVVDFEIEGDFPKYGNNDDRVDDIAVDLVERFMTKLRSHKTYRDSEHTMSVLTITSNVVYGKKTGNTPDGRKAGEPFAPGANPMHGRDQKGALSSLSSVAKIPYDCCKDGISNTFSIVPKSLGKEPEDQNRNLTSMLDGYAMQCGHHLNINVFNRETLIDAMEHPEEYPQLTIRVSGYAVNFIKLTREQQLDVISRTFHESM</sequence>
<protein>
    <recommendedName>
        <fullName>Formate acetyltransferase</fullName>
        <ecNumber evidence="1">2.3.1.54</ecNumber>
    </recommendedName>
    <alternativeName>
        <fullName>Pyruvate formate-lyase</fullName>
    </alternativeName>
</protein>
<reference key="1">
    <citation type="journal article" date="2004" name="Proc. Natl. Acad. Sci. U.S.A.">
        <title>Complete genomes of two clinical Staphylococcus aureus strains: evidence for the rapid evolution of virulence and drug resistance.</title>
        <authorList>
            <person name="Holden M.T.G."/>
            <person name="Feil E.J."/>
            <person name="Lindsay J.A."/>
            <person name="Peacock S.J."/>
            <person name="Day N.P.J."/>
            <person name="Enright M.C."/>
            <person name="Foster T.J."/>
            <person name="Moore C.E."/>
            <person name="Hurst L."/>
            <person name="Atkin R."/>
            <person name="Barron A."/>
            <person name="Bason N."/>
            <person name="Bentley S.D."/>
            <person name="Chillingworth C."/>
            <person name="Chillingworth T."/>
            <person name="Churcher C."/>
            <person name="Clark L."/>
            <person name="Corton C."/>
            <person name="Cronin A."/>
            <person name="Doggett J."/>
            <person name="Dowd L."/>
            <person name="Feltwell T."/>
            <person name="Hance Z."/>
            <person name="Harris B."/>
            <person name="Hauser H."/>
            <person name="Holroyd S."/>
            <person name="Jagels K."/>
            <person name="James K.D."/>
            <person name="Lennard N."/>
            <person name="Line A."/>
            <person name="Mayes R."/>
            <person name="Moule S."/>
            <person name="Mungall K."/>
            <person name="Ormond D."/>
            <person name="Quail M.A."/>
            <person name="Rabbinowitsch E."/>
            <person name="Rutherford K.M."/>
            <person name="Sanders M."/>
            <person name="Sharp S."/>
            <person name="Simmonds M."/>
            <person name="Stevens K."/>
            <person name="Whitehead S."/>
            <person name="Barrell B.G."/>
            <person name="Spratt B.G."/>
            <person name="Parkhill J."/>
        </authorList>
    </citation>
    <scope>NUCLEOTIDE SEQUENCE [LARGE SCALE GENOMIC DNA]</scope>
    <source>
        <strain>MSSA476</strain>
    </source>
</reference>
<organism>
    <name type="scientific">Staphylococcus aureus (strain MSSA476)</name>
    <dbReference type="NCBI Taxonomy" id="282459"/>
    <lineage>
        <taxon>Bacteria</taxon>
        <taxon>Bacillati</taxon>
        <taxon>Bacillota</taxon>
        <taxon>Bacilli</taxon>
        <taxon>Bacillales</taxon>
        <taxon>Staphylococcaceae</taxon>
        <taxon>Staphylococcus</taxon>
    </lineage>
</organism>
<comment type="function">
    <text evidence="1">Catalyzes the conversion of pyruvate to formate and acetyl-CoA.</text>
</comment>
<comment type="catalytic activity">
    <reaction evidence="1">
        <text>formate + acetyl-CoA = pyruvate + CoA</text>
        <dbReference type="Rhea" id="RHEA:11844"/>
        <dbReference type="ChEBI" id="CHEBI:15361"/>
        <dbReference type="ChEBI" id="CHEBI:15740"/>
        <dbReference type="ChEBI" id="CHEBI:57287"/>
        <dbReference type="ChEBI" id="CHEBI:57288"/>
        <dbReference type="EC" id="2.3.1.54"/>
    </reaction>
</comment>
<comment type="pathway">
    <text>Fermentation; pyruvate fermentation; formate from pyruvate: step 1/1.</text>
</comment>
<comment type="subunit">
    <text evidence="1">Homodimer.</text>
</comment>
<comment type="subcellular location">
    <subcellularLocation>
        <location evidence="2">Cytoplasm</location>
    </subcellularLocation>
</comment>
<comment type="miscellaneous">
    <text evidence="1">Several mechanisms have been proposed based on complexes formed with substrate analogs. After activation by the glycine radical, the cysteine radical, Cys-414, can abstract hydrogen atoms from the other active site cysteine, Cys-413, and from coenzyme A, and it can also transfer hydrogen atoms to product radicals. The other active site cysteine can attack the central carbonyl of pyruvate and covalently bind the product acetyl group.</text>
</comment>
<comment type="similarity">
    <text evidence="5">Belongs to the glycyl radical enzyme (GRE) family. PFL subfamily.</text>
</comment>
<evidence type="ECO:0000250" key="1">
    <source>
        <dbReference type="UniProtKB" id="P09373"/>
    </source>
</evidence>
<evidence type="ECO:0000250" key="2">
    <source>
        <dbReference type="UniProtKB" id="Q5HJF4"/>
    </source>
</evidence>
<evidence type="ECO:0000255" key="3">
    <source>
        <dbReference type="PROSITE-ProRule" id="PRU00493"/>
    </source>
</evidence>
<evidence type="ECO:0000255" key="4">
    <source>
        <dbReference type="PROSITE-ProRule" id="PRU00887"/>
    </source>
</evidence>
<evidence type="ECO:0000305" key="5"/>